<reference key="1">
    <citation type="journal article" date="2004" name="PLoS Biol.">
        <title>Genomic insights into methanotrophy: the complete genome sequence of Methylococcus capsulatus (Bath).</title>
        <authorList>
            <person name="Ward N.L."/>
            <person name="Larsen O."/>
            <person name="Sakwa J."/>
            <person name="Bruseth L."/>
            <person name="Khouri H.M."/>
            <person name="Durkin A.S."/>
            <person name="Dimitrov G."/>
            <person name="Jiang L."/>
            <person name="Scanlan D."/>
            <person name="Kang K.H."/>
            <person name="Lewis M.R."/>
            <person name="Nelson K.E."/>
            <person name="Methe B.A."/>
            <person name="Wu M."/>
            <person name="Heidelberg J.F."/>
            <person name="Paulsen I.T."/>
            <person name="Fouts D.E."/>
            <person name="Ravel J."/>
            <person name="Tettelin H."/>
            <person name="Ren Q."/>
            <person name="Read T.D."/>
            <person name="DeBoy R.T."/>
            <person name="Seshadri R."/>
            <person name="Salzberg S.L."/>
            <person name="Jensen H.B."/>
            <person name="Birkeland N.K."/>
            <person name="Nelson W.C."/>
            <person name="Dodson R.J."/>
            <person name="Grindhaug S.H."/>
            <person name="Holt I.E."/>
            <person name="Eidhammer I."/>
            <person name="Jonasen I."/>
            <person name="Vanaken S."/>
            <person name="Utterback T.R."/>
            <person name="Feldblyum T.V."/>
            <person name="Fraser C.M."/>
            <person name="Lillehaug J.R."/>
            <person name="Eisen J.A."/>
        </authorList>
    </citation>
    <scope>NUCLEOTIDE SEQUENCE [LARGE SCALE GENOMIC DNA]</scope>
    <source>
        <strain>ATCC 33009 / NCIMB 11132 / Bath</strain>
    </source>
</reference>
<feature type="chain" id="PRO_0000170560" description="Guanylate kinase">
    <location>
        <begin position="1"/>
        <end position="204"/>
    </location>
</feature>
<feature type="domain" description="Guanylate kinase-like" evidence="1">
    <location>
        <begin position="4"/>
        <end position="182"/>
    </location>
</feature>
<feature type="binding site" evidence="1">
    <location>
        <begin position="11"/>
        <end position="18"/>
    </location>
    <ligand>
        <name>ATP</name>
        <dbReference type="ChEBI" id="CHEBI:30616"/>
    </ligand>
</feature>
<gene>
    <name evidence="1" type="primary">gmk</name>
    <name type="ordered locus">MCA2975</name>
</gene>
<accession>Q602T6</accession>
<evidence type="ECO:0000255" key="1">
    <source>
        <dbReference type="HAMAP-Rule" id="MF_00328"/>
    </source>
</evidence>
<proteinExistence type="inferred from homology"/>
<comment type="function">
    <text evidence="1">Essential for recycling GMP and indirectly, cGMP.</text>
</comment>
<comment type="catalytic activity">
    <reaction evidence="1">
        <text>GMP + ATP = GDP + ADP</text>
        <dbReference type="Rhea" id="RHEA:20780"/>
        <dbReference type="ChEBI" id="CHEBI:30616"/>
        <dbReference type="ChEBI" id="CHEBI:58115"/>
        <dbReference type="ChEBI" id="CHEBI:58189"/>
        <dbReference type="ChEBI" id="CHEBI:456216"/>
        <dbReference type="EC" id="2.7.4.8"/>
    </reaction>
</comment>
<comment type="subcellular location">
    <subcellularLocation>
        <location evidence="1">Cytoplasm</location>
    </subcellularLocation>
</comment>
<comment type="similarity">
    <text evidence="1">Belongs to the guanylate kinase family.</text>
</comment>
<sequence length="204" mass="22777">MTQGLLYVISAPSGAGKTSLVSALCAGAPDLAVSVSHTTRPQRPGEVPGQDYWFVDKAEFEKMIANEAFLEYARVFDNYYGTAKTTVEEVLATGRDAVLEIDWQGARQVRRLMPACVSVFILPPSRQALEQRLRTRQQDSEAVIARRMEAAISEMSHYAEYDYLIVNDDFNLALNQLRAIVQTQRLTVQRQAPRLGRLIADLLG</sequence>
<name>KGUA_METCA</name>
<organism>
    <name type="scientific">Methylococcus capsulatus (strain ATCC 33009 / NCIMB 11132 / Bath)</name>
    <dbReference type="NCBI Taxonomy" id="243233"/>
    <lineage>
        <taxon>Bacteria</taxon>
        <taxon>Pseudomonadati</taxon>
        <taxon>Pseudomonadota</taxon>
        <taxon>Gammaproteobacteria</taxon>
        <taxon>Methylococcales</taxon>
        <taxon>Methylococcaceae</taxon>
        <taxon>Methylococcus</taxon>
    </lineage>
</organism>
<keyword id="KW-0067">ATP-binding</keyword>
<keyword id="KW-0963">Cytoplasm</keyword>
<keyword id="KW-0418">Kinase</keyword>
<keyword id="KW-0547">Nucleotide-binding</keyword>
<keyword id="KW-1185">Reference proteome</keyword>
<keyword id="KW-0808">Transferase</keyword>
<dbReference type="EC" id="2.7.4.8" evidence="1"/>
<dbReference type="EMBL" id="AE017282">
    <property type="protein sequence ID" value="AAU90896.1"/>
    <property type="molecule type" value="Genomic_DNA"/>
</dbReference>
<dbReference type="RefSeq" id="WP_010962165.1">
    <property type="nucleotide sequence ID" value="NC_002977.6"/>
</dbReference>
<dbReference type="SMR" id="Q602T6"/>
<dbReference type="STRING" id="243233.MCA2975"/>
<dbReference type="GeneID" id="88225137"/>
<dbReference type="KEGG" id="mca:MCA2975"/>
<dbReference type="eggNOG" id="COG0194">
    <property type="taxonomic scope" value="Bacteria"/>
</dbReference>
<dbReference type="HOGENOM" id="CLU_001715_1_0_6"/>
<dbReference type="Proteomes" id="UP000006821">
    <property type="component" value="Chromosome"/>
</dbReference>
<dbReference type="GO" id="GO:0005829">
    <property type="term" value="C:cytosol"/>
    <property type="evidence" value="ECO:0007669"/>
    <property type="project" value="TreeGrafter"/>
</dbReference>
<dbReference type="GO" id="GO:0005524">
    <property type="term" value="F:ATP binding"/>
    <property type="evidence" value="ECO:0007669"/>
    <property type="project" value="UniProtKB-UniRule"/>
</dbReference>
<dbReference type="GO" id="GO:0004385">
    <property type="term" value="F:guanylate kinase activity"/>
    <property type="evidence" value="ECO:0007669"/>
    <property type="project" value="UniProtKB-UniRule"/>
</dbReference>
<dbReference type="CDD" id="cd00071">
    <property type="entry name" value="GMPK"/>
    <property type="match status" value="1"/>
</dbReference>
<dbReference type="FunFam" id="3.40.50.300:FF:000084">
    <property type="entry name" value="Guanylate kinase"/>
    <property type="match status" value="1"/>
</dbReference>
<dbReference type="FunFam" id="3.30.63.10:FF:000002">
    <property type="entry name" value="Guanylate kinase 1"/>
    <property type="match status" value="1"/>
</dbReference>
<dbReference type="Gene3D" id="3.30.63.10">
    <property type="entry name" value="Guanylate Kinase phosphate binding domain"/>
    <property type="match status" value="1"/>
</dbReference>
<dbReference type="Gene3D" id="3.40.50.300">
    <property type="entry name" value="P-loop containing nucleotide triphosphate hydrolases"/>
    <property type="match status" value="1"/>
</dbReference>
<dbReference type="HAMAP" id="MF_00328">
    <property type="entry name" value="Guanylate_kinase"/>
    <property type="match status" value="1"/>
</dbReference>
<dbReference type="InterPro" id="IPR008145">
    <property type="entry name" value="GK/Ca_channel_bsu"/>
</dbReference>
<dbReference type="InterPro" id="IPR008144">
    <property type="entry name" value="Guanylate_kin-like_dom"/>
</dbReference>
<dbReference type="InterPro" id="IPR017665">
    <property type="entry name" value="Guanylate_kinase"/>
</dbReference>
<dbReference type="InterPro" id="IPR020590">
    <property type="entry name" value="Guanylate_kinase_CS"/>
</dbReference>
<dbReference type="InterPro" id="IPR027417">
    <property type="entry name" value="P-loop_NTPase"/>
</dbReference>
<dbReference type="NCBIfam" id="TIGR03263">
    <property type="entry name" value="guanyl_kin"/>
    <property type="match status" value="1"/>
</dbReference>
<dbReference type="PANTHER" id="PTHR23117:SF13">
    <property type="entry name" value="GUANYLATE KINASE"/>
    <property type="match status" value="1"/>
</dbReference>
<dbReference type="PANTHER" id="PTHR23117">
    <property type="entry name" value="GUANYLATE KINASE-RELATED"/>
    <property type="match status" value="1"/>
</dbReference>
<dbReference type="Pfam" id="PF00625">
    <property type="entry name" value="Guanylate_kin"/>
    <property type="match status" value="1"/>
</dbReference>
<dbReference type="SMART" id="SM00072">
    <property type="entry name" value="GuKc"/>
    <property type="match status" value="1"/>
</dbReference>
<dbReference type="SUPFAM" id="SSF52540">
    <property type="entry name" value="P-loop containing nucleoside triphosphate hydrolases"/>
    <property type="match status" value="1"/>
</dbReference>
<dbReference type="PROSITE" id="PS00856">
    <property type="entry name" value="GUANYLATE_KINASE_1"/>
    <property type="match status" value="1"/>
</dbReference>
<dbReference type="PROSITE" id="PS50052">
    <property type="entry name" value="GUANYLATE_KINASE_2"/>
    <property type="match status" value="1"/>
</dbReference>
<protein>
    <recommendedName>
        <fullName evidence="1">Guanylate kinase</fullName>
        <ecNumber evidence="1">2.7.4.8</ecNumber>
    </recommendedName>
    <alternativeName>
        <fullName evidence="1">GMP kinase</fullName>
    </alternativeName>
</protein>